<name>COL7_CAEEL</name>
<gene>
    <name type="primary">col-7</name>
    <name type="ORF">C15A11.5</name>
</gene>
<sequence>MSSATFLSVMAGLSGIVVFGALISVFHIYSDINSFVEDSHRELGEFKGFANDAWNSMINQDDSVRMARSVFGRRRQKKQSQCNCGQQASNCPAGPPGPPGASGDKGHDGQPGQAGKPGQPGVAGPSHHQKQECIKCPQGLPGPAGVPGQPGPKGPNGNPGAPAQGGGQGPPGPPGPAGSAGSPGQAGAPGNPGSPGKSGQRGRGLPGPSGAPGPQGPPGAPGQPGSGNAPGPAGPPGPAGPNGQPGHPGQDGQPGAPGNDGTPGSDAAYCPCPTRSSVLRHRNVNRHRAAASKKRVVAKKRVAKKRVVAARRHVQA</sequence>
<dbReference type="EMBL" id="Z79694">
    <property type="protein sequence ID" value="CAB01961.1"/>
    <property type="molecule type" value="Genomic_DNA"/>
</dbReference>
<dbReference type="EMBL" id="M25478">
    <property type="protein sequence ID" value="AAA27992.1"/>
    <property type="molecule type" value="Genomic_DNA"/>
</dbReference>
<dbReference type="PIR" id="T19291">
    <property type="entry name" value="T19291"/>
</dbReference>
<dbReference type="RefSeq" id="NP_492090.1">
    <property type="nucleotide sequence ID" value="NM_059689.8"/>
</dbReference>
<dbReference type="SMR" id="P18832"/>
<dbReference type="FunCoup" id="P18832">
    <property type="interactions" value="811"/>
</dbReference>
<dbReference type="STRING" id="6239.C15A11.5.1"/>
<dbReference type="PaxDb" id="6239-C15A11.5"/>
<dbReference type="EnsemblMetazoa" id="C15A11.5.1">
    <property type="protein sequence ID" value="C15A11.5.1"/>
    <property type="gene ID" value="WBGene00000596"/>
</dbReference>
<dbReference type="GeneID" id="172494"/>
<dbReference type="KEGG" id="cel:CELE_C15A11.5"/>
<dbReference type="UCSC" id="C15A11.5">
    <property type="organism name" value="c. elegans"/>
</dbReference>
<dbReference type="AGR" id="WB:WBGene00000596"/>
<dbReference type="CTD" id="172494"/>
<dbReference type="WormBase" id="C15A11.5">
    <property type="protein sequence ID" value="CE08173"/>
    <property type="gene ID" value="WBGene00000596"/>
    <property type="gene designation" value="col-7"/>
</dbReference>
<dbReference type="eggNOG" id="KOG3544">
    <property type="taxonomic scope" value="Eukaryota"/>
</dbReference>
<dbReference type="GeneTree" id="ENSGT00970000196071"/>
<dbReference type="HOGENOM" id="CLU_001074_4_3_1"/>
<dbReference type="InParanoid" id="P18832"/>
<dbReference type="OMA" id="SAWHEMK"/>
<dbReference type="OrthoDB" id="5876933at2759"/>
<dbReference type="PRO" id="PR:P18832"/>
<dbReference type="Proteomes" id="UP000001940">
    <property type="component" value="Chromosome I"/>
</dbReference>
<dbReference type="Bgee" id="WBGene00000596">
    <property type="expression patterns" value="Expressed in adult organism and 1 other cell type or tissue"/>
</dbReference>
<dbReference type="GO" id="GO:0005581">
    <property type="term" value="C:collagen trimer"/>
    <property type="evidence" value="ECO:0007669"/>
    <property type="project" value="UniProtKB-KW"/>
</dbReference>
<dbReference type="GO" id="GO:0042302">
    <property type="term" value="F:structural constituent of cuticle"/>
    <property type="evidence" value="ECO:0007669"/>
    <property type="project" value="UniProtKB-KW"/>
</dbReference>
<dbReference type="InterPro" id="IPR002486">
    <property type="entry name" value="Col_cuticle_N"/>
</dbReference>
<dbReference type="PANTHER" id="PTHR24637">
    <property type="entry name" value="COLLAGEN"/>
    <property type="match status" value="1"/>
</dbReference>
<dbReference type="PANTHER" id="PTHR24637:SF330">
    <property type="entry name" value="CUTICLE COLLAGEN 7-RELATED"/>
    <property type="match status" value="1"/>
</dbReference>
<dbReference type="Pfam" id="PF01484">
    <property type="entry name" value="Col_cuticle_N"/>
    <property type="match status" value="1"/>
</dbReference>
<dbReference type="SMART" id="SM01088">
    <property type="entry name" value="Col_cuticle_N"/>
    <property type="match status" value="1"/>
</dbReference>
<comment type="function">
    <text>Nematode cuticles are composed largely of collagen-like proteins. The cuticle functions both as an exoskeleton and as a barrier to protect the worm from its environment.</text>
</comment>
<comment type="subunit">
    <text>Collagen polypeptide chains are complexed within the cuticle by disulfide bonds and other types of covalent cross-links.</text>
</comment>
<comment type="similarity">
    <text evidence="3">Belongs to the cuticular collagen family.</text>
</comment>
<keyword id="KW-0176">Collagen</keyword>
<keyword id="KW-0193">Cuticle</keyword>
<keyword id="KW-1015">Disulfide bond</keyword>
<keyword id="KW-1185">Reference proteome</keyword>
<keyword id="KW-0677">Repeat</keyword>
<keyword id="KW-0732">Signal</keyword>
<feature type="signal peptide" evidence="1">
    <location>
        <begin position="1"/>
        <end position="34"/>
    </location>
</feature>
<feature type="chain" id="PRO_0000006422" description="Cuticle collagen 7">
    <location>
        <begin position="35"/>
        <end position="316"/>
    </location>
</feature>
<feature type="region of interest" description="Disordered" evidence="2">
    <location>
        <begin position="78"/>
        <end position="269"/>
    </location>
</feature>
<feature type="region of interest" description="Triple-helical region">
    <location>
        <begin position="94"/>
        <end position="126"/>
    </location>
</feature>
<feature type="region of interest" description="Triple-helical region">
    <location>
        <begin position="139"/>
        <end position="198"/>
    </location>
</feature>
<feature type="region of interest" description="Triple-helical region">
    <location>
        <begin position="204"/>
        <end position="263"/>
    </location>
</feature>
<feature type="region of interest" description="Disordered" evidence="2">
    <location>
        <begin position="281"/>
        <end position="316"/>
    </location>
</feature>
<feature type="compositionally biased region" description="Polar residues" evidence="2">
    <location>
        <begin position="79"/>
        <end position="90"/>
    </location>
</feature>
<feature type="compositionally biased region" description="Low complexity" evidence="2">
    <location>
        <begin position="110"/>
        <end position="125"/>
    </location>
</feature>
<feature type="compositionally biased region" description="Low complexity" evidence="2">
    <location>
        <begin position="137"/>
        <end position="147"/>
    </location>
</feature>
<feature type="compositionally biased region" description="Low complexity" evidence="2">
    <location>
        <begin position="177"/>
        <end position="198"/>
    </location>
</feature>
<feature type="compositionally biased region" description="Pro residues" evidence="2">
    <location>
        <begin position="209"/>
        <end position="221"/>
    </location>
</feature>
<feature type="compositionally biased region" description="Low complexity" evidence="2">
    <location>
        <begin position="241"/>
        <end position="260"/>
    </location>
</feature>
<feature type="sequence conflict" description="In Ref. 2; AAA27992." evidence="3" ref="2">
    <location>
        <begin position="48"/>
        <end position="60"/>
    </location>
</feature>
<feature type="sequence conflict" description="In Ref. 2; AAA27992." evidence="3" ref="2">
    <original>G</original>
    <variation>P</variation>
    <location>
        <position position="165"/>
    </location>
</feature>
<organism>
    <name type="scientific">Caenorhabditis elegans</name>
    <dbReference type="NCBI Taxonomy" id="6239"/>
    <lineage>
        <taxon>Eukaryota</taxon>
        <taxon>Metazoa</taxon>
        <taxon>Ecdysozoa</taxon>
        <taxon>Nematoda</taxon>
        <taxon>Chromadorea</taxon>
        <taxon>Rhabditida</taxon>
        <taxon>Rhabditina</taxon>
        <taxon>Rhabditomorpha</taxon>
        <taxon>Rhabditoidea</taxon>
        <taxon>Rhabditidae</taxon>
        <taxon>Peloderinae</taxon>
        <taxon>Caenorhabditis</taxon>
    </lineage>
</organism>
<proteinExistence type="inferred from homology"/>
<evidence type="ECO:0000255" key="1"/>
<evidence type="ECO:0000256" key="2">
    <source>
        <dbReference type="SAM" id="MobiDB-lite"/>
    </source>
</evidence>
<evidence type="ECO:0000305" key="3"/>
<accession>P18832</accession>
<accession>Q93210</accession>
<reference key="1">
    <citation type="journal article" date="1998" name="Science">
        <title>Genome sequence of the nematode C. elegans: a platform for investigating biology.</title>
        <authorList>
            <consortium name="The C. elegans sequencing consortium"/>
        </authorList>
    </citation>
    <scope>NUCLEOTIDE SEQUENCE [LARGE SCALE GENOMIC DNA]</scope>
    <source>
        <strain>Bristol N2</strain>
    </source>
</reference>
<reference key="2">
    <citation type="journal article" date="1989" name="Gene">
        <title>Sequence comparisons of developmentally regulated collagen genes of Caenorhabditis elegans.</title>
        <authorList>
            <person name="Cox G.N."/>
            <person name="Fields C."/>
            <person name="Kramer J.M."/>
            <person name="Rosenzweig B."/>
            <person name="Hirsh D."/>
        </authorList>
    </citation>
    <scope>NUCLEOTIDE SEQUENCE [GENOMIC DNA] OF 1-181</scope>
    <source>
        <strain>Bristol N2</strain>
    </source>
</reference>
<protein>
    <recommendedName>
        <fullName>Cuticle collagen 7</fullName>
    </recommendedName>
</protein>